<dbReference type="EC" id="3.2.1.18" evidence="1"/>
<dbReference type="EMBL" id="CY006709">
    <property type="protein sequence ID" value="ABB96344.1"/>
    <property type="molecule type" value="Genomic_RNA"/>
</dbReference>
<dbReference type="SMR" id="Q2VND0"/>
<dbReference type="CAZy" id="GH34">
    <property type="family name" value="Glycoside Hydrolase Family 34"/>
</dbReference>
<dbReference type="GlyCosmos" id="Q2VND0">
    <property type="glycosylation" value="7 sites, No reported glycans"/>
</dbReference>
<dbReference type="PRO" id="PR:Q2VND0"/>
<dbReference type="Proteomes" id="UP000008574">
    <property type="component" value="Genome"/>
</dbReference>
<dbReference type="GO" id="GO:0020002">
    <property type="term" value="C:host cell plasma membrane"/>
    <property type="evidence" value="ECO:0007669"/>
    <property type="project" value="UniProtKB-SubCell"/>
</dbReference>
<dbReference type="GO" id="GO:0016020">
    <property type="term" value="C:membrane"/>
    <property type="evidence" value="ECO:0007669"/>
    <property type="project" value="UniProtKB-UniRule"/>
</dbReference>
<dbReference type="GO" id="GO:0055036">
    <property type="term" value="C:virion membrane"/>
    <property type="evidence" value="ECO:0007669"/>
    <property type="project" value="UniProtKB-SubCell"/>
</dbReference>
<dbReference type="GO" id="GO:0004308">
    <property type="term" value="F:exo-alpha-sialidase activity"/>
    <property type="evidence" value="ECO:0007669"/>
    <property type="project" value="UniProtKB-UniRule"/>
</dbReference>
<dbReference type="GO" id="GO:0046872">
    <property type="term" value="F:metal ion binding"/>
    <property type="evidence" value="ECO:0007669"/>
    <property type="project" value="UniProtKB-UniRule"/>
</dbReference>
<dbReference type="GO" id="GO:0005975">
    <property type="term" value="P:carbohydrate metabolic process"/>
    <property type="evidence" value="ECO:0007669"/>
    <property type="project" value="InterPro"/>
</dbReference>
<dbReference type="GO" id="GO:0046761">
    <property type="term" value="P:viral budding from plasma membrane"/>
    <property type="evidence" value="ECO:0007669"/>
    <property type="project" value="UniProtKB-UniRule"/>
</dbReference>
<dbReference type="CDD" id="cd15483">
    <property type="entry name" value="Influenza_NA"/>
    <property type="match status" value="1"/>
</dbReference>
<dbReference type="Gene3D" id="2.120.10.10">
    <property type="match status" value="1"/>
</dbReference>
<dbReference type="HAMAP" id="MF_04071">
    <property type="entry name" value="INFV_NRAM"/>
    <property type="match status" value="1"/>
</dbReference>
<dbReference type="InterPro" id="IPR001860">
    <property type="entry name" value="Glyco_hydro_34"/>
</dbReference>
<dbReference type="InterPro" id="IPR033654">
    <property type="entry name" value="Sialidase_Influenza_A/B"/>
</dbReference>
<dbReference type="InterPro" id="IPR036278">
    <property type="entry name" value="Sialidase_sf"/>
</dbReference>
<dbReference type="Pfam" id="PF00064">
    <property type="entry name" value="Neur"/>
    <property type="match status" value="1"/>
</dbReference>
<dbReference type="SUPFAM" id="SSF50939">
    <property type="entry name" value="Sialidases"/>
    <property type="match status" value="1"/>
</dbReference>
<organismHost>
    <name type="scientific">Aves</name>
    <dbReference type="NCBI Taxonomy" id="8782"/>
</organismHost>
<organismHost>
    <name type="scientific">Cetacea</name>
    <name type="common">whales</name>
    <dbReference type="NCBI Taxonomy" id="9721"/>
</organismHost>
<organismHost>
    <name type="scientific">Homo sapiens</name>
    <name type="common">Human</name>
    <dbReference type="NCBI Taxonomy" id="9606"/>
</organismHost>
<organismHost>
    <name type="scientific">Phocidae</name>
    <name type="common">true seals</name>
    <dbReference type="NCBI Taxonomy" id="9709"/>
</organismHost>
<organismHost>
    <name type="scientific">Sus scrofa</name>
    <name type="common">Pig</name>
    <dbReference type="NCBI Taxonomy" id="9823"/>
</organismHost>
<comment type="function">
    <text evidence="1">Catalyzes the removal of terminal sialic acid residues from viral and cellular glycoconjugates. Cleaves off the terminal sialic acids on the glycosylated HA during virus budding to facilitate virus release. Additionally helps virus spread through the circulation by further removing sialic acids from the cell surface. These cleavages prevent self-aggregation and ensure the efficient spread of the progeny virus from cell to cell. Otherwise, infection would be limited to one round of replication. Described as a receptor-destroying enzyme because it cleaves a terminal sialic acid from the cellular receptors. May facilitate viral invasion of the upper airways by cleaving the sialic acid moieties on the mucin of the airway epithelial cells. Likely to plays a role in the budding process through its association with lipid rafts during intracellular transport. May additionally display a raft-association independent effect on budding. Plays a role in the determination of host range restriction on replication and virulence. Sialidase activity in late endosome/lysosome traffic seems to enhance virus replication.</text>
</comment>
<comment type="catalytic activity">
    <reaction evidence="1">
        <text>Hydrolysis of alpha-(2-&gt;3)-, alpha-(2-&gt;6)-, alpha-(2-&gt;8)- glycosidic linkages of terminal sialic acid residues in oligosaccharides, glycoproteins, glycolipids, colominic acid and synthetic substrates.</text>
        <dbReference type="EC" id="3.2.1.18"/>
    </reaction>
</comment>
<comment type="cofactor">
    <cofactor evidence="1">
        <name>Ca(2+)</name>
        <dbReference type="ChEBI" id="CHEBI:29108"/>
    </cofactor>
</comment>
<comment type="activity regulation">
    <text evidence="1">Inhibited by the neuraminidase inhibitors zanamivir (Relenza) and oseltamivir (Tamiflu). These drugs interfere with the release of progeny virus from infected cells and are effective against all influenza strains. Resistance to neuraminidase inhibitors is quite rare.</text>
</comment>
<comment type="subunit">
    <text evidence="1">Homotetramer.</text>
</comment>
<comment type="subcellular location">
    <subcellularLocation>
        <location evidence="1">Virion membrane</location>
    </subcellularLocation>
    <subcellularLocation>
        <location evidence="1">Host apical cell membrane</location>
        <topology evidence="1">Single-pass type II membrane protein</topology>
    </subcellularLocation>
    <text evidence="1">Preferentially accumulates at the apical plasma membrane in infected polarized epithelial cells, which is the virus assembly site. Uses lipid rafts for cell surface transport and apical sorting. In the virion, forms a mushroom-shaped spike on the surface of the membrane.</text>
</comment>
<comment type="domain">
    <text evidence="1">Intact N-terminus is essential for virion morphogenesis. Possesses two apical sorting signals, one in the ectodomain, which is likely to be a glycan, and the other in the transmembrane domain. The transmembrane domain also plays a role in lipid raft association.</text>
</comment>
<comment type="PTM">
    <text evidence="1">N-glycosylated.</text>
</comment>
<comment type="miscellaneous">
    <text>The influenza A genome consist of 8 RNA segments. Genetic variation of hemagglutinin and/or neuraminidase genes results in the emergence of new influenza strains. The mechanism of variation can be the result of point mutations or the result of genetic reassortment between segments of two different strains.</text>
</comment>
<comment type="similarity">
    <text evidence="1">Belongs to the glycosyl hydrolase 34 family.</text>
</comment>
<keyword id="KW-0106">Calcium</keyword>
<keyword id="KW-1015">Disulfide bond</keyword>
<keyword id="KW-0325">Glycoprotein</keyword>
<keyword id="KW-0326">Glycosidase</keyword>
<keyword id="KW-1032">Host cell membrane</keyword>
<keyword id="KW-1043">Host membrane</keyword>
<keyword id="KW-0378">Hydrolase</keyword>
<keyword id="KW-0472">Membrane</keyword>
<keyword id="KW-0479">Metal-binding</keyword>
<keyword id="KW-0735">Signal-anchor</keyword>
<keyword id="KW-0812">Transmembrane</keyword>
<keyword id="KW-1133">Transmembrane helix</keyword>
<keyword id="KW-0946">Virion</keyword>
<evidence type="ECO:0000255" key="1">
    <source>
        <dbReference type="HAMAP-Rule" id="MF_04071"/>
    </source>
</evidence>
<protein>
    <recommendedName>
        <fullName evidence="1">Neuraminidase</fullName>
        <ecNumber evidence="1">3.2.1.18</ecNumber>
    </recommendedName>
</protein>
<proteinExistence type="inferred from homology"/>
<accession>Q2VND0</accession>
<name>NRAM_I78A8</name>
<reference key="1">
    <citation type="submission" date="2005-12" db="EMBL/GenBank/DDBJ databases">
        <title>The NIAID influenza genome sequencing project.</title>
        <authorList>
            <person name="Ghedin E."/>
            <person name="Spiro D."/>
            <person name="Miller N."/>
            <person name="Zaborsky J."/>
            <person name="Feldblyum T."/>
            <person name="Subbu V."/>
            <person name="Shumway M."/>
            <person name="Sparenborg J."/>
            <person name="Groveman L."/>
            <person name="Halpin R."/>
            <person name="Sitz J."/>
            <person name="Koo H."/>
            <person name="Salzberg S.L."/>
            <person name="Webster R.G."/>
            <person name="Hoffmann E."/>
            <person name="Krauss S."/>
            <person name="Naeve C."/>
            <person name="Bao Y."/>
            <person name="Bolotov P."/>
            <person name="Dernovoy D."/>
            <person name="Kiryutin B."/>
            <person name="Lipman D.J."/>
            <person name="Tatusova T."/>
        </authorList>
    </citation>
    <scope>NUCLEOTIDE SEQUENCE [GENOMIC RNA]</scope>
</reference>
<reference key="2">
    <citation type="journal article" date="2004" name="Virus Res.">
        <title>Assembly and budding of influenza virus.</title>
        <authorList>
            <person name="Nayak D.P."/>
            <person name="Hui E.K."/>
            <person name="Barman S."/>
        </authorList>
    </citation>
    <scope>REVIEW</scope>
</reference>
<reference key="3">
    <citation type="journal article" date="2005" name="N. Engl. J. Med.">
        <title>Neuraminidase inhibitors for influenza.</title>
        <authorList>
            <person name="Moscona A."/>
        </authorList>
    </citation>
    <scope>REVIEW</scope>
</reference>
<reference key="4">
    <citation type="journal article" date="2005" name="Biol. Pharm. Bull.">
        <title>Sialobiology of influenza: molecular mechanism of host range variation of influenza viruses.</title>
        <authorList>
            <person name="Suzuki Y."/>
        </authorList>
    </citation>
    <scope>REVIEW</scope>
</reference>
<sequence length="469" mass="52237">MNPNQKIITIGSVSLTIATICFLMQIAILVTTVTLHFKQYECDSPANNQVMPCEPIIIERNITEIVYLTNTTIEKEICPKLVEYRNWSKPQCKITGFAPFSKDNSIRLSAGGDIWVTREPYVSCDPGRCYQFALGQGTTLDNKHSNDTIHDRTPHRTLLMNELGVPFHLGTRQVCIAWSSSSCHDGKAWLHVCVTGYDKNATASFIYDGRLVDSIGSWSKNILRTQESECVCINGTCTVVMTDGSASERADTKVLFIEEGKIVHISPLSGSAQHVEECSCYPRYPGVRCVCRDNWKGSNRPVVDINVKDYSIASSYVCSGLVGDTPRKNDRYSSSYCRNPNNEKGNHGVKGWAFDDGNDVWMGRTISDESRSGYETFKVIGGWSTPNSKLQINRQVIVDSDNRSGYSGIFSVEGKSCINRCFYVELIRGREQETRVWWTSNSIVVFCGTSGTYGTGSWPDGADINLMPI</sequence>
<feature type="chain" id="PRO_0000280143" description="Neuraminidase">
    <location>
        <begin position="1"/>
        <end position="469"/>
    </location>
</feature>
<feature type="topological domain" description="Intravirion" evidence="1">
    <location>
        <begin position="1"/>
        <end position="9"/>
    </location>
</feature>
<feature type="transmembrane region" description="Helical" evidence="1">
    <location>
        <begin position="10"/>
        <end position="30"/>
    </location>
</feature>
<feature type="topological domain" description="Virion surface" evidence="1">
    <location>
        <begin position="31"/>
        <end position="469"/>
    </location>
</feature>
<feature type="region of interest" description="Involved in apical transport and lipid raft association" evidence="1">
    <location>
        <begin position="11"/>
        <end position="33"/>
    </location>
</feature>
<feature type="region of interest" description="Hypervariable stalk region" evidence="1">
    <location>
        <begin position="36"/>
        <end position="88"/>
    </location>
</feature>
<feature type="region of interest" description="Head of neuraminidase" evidence="1">
    <location>
        <begin position="91"/>
        <end position="469"/>
    </location>
</feature>
<feature type="active site" description="Proton donor/acceptor" evidence="1">
    <location>
        <position position="151"/>
    </location>
</feature>
<feature type="active site" description="Nucleophile" evidence="1">
    <location>
        <position position="406"/>
    </location>
</feature>
<feature type="binding site" evidence="1">
    <location>
        <position position="118"/>
    </location>
    <ligand>
        <name>substrate</name>
    </ligand>
</feature>
<feature type="binding site" evidence="1">
    <location>
        <position position="152"/>
    </location>
    <ligand>
        <name>substrate</name>
    </ligand>
</feature>
<feature type="binding site" evidence="1">
    <location>
        <begin position="276"/>
        <end position="277"/>
    </location>
    <ligand>
        <name>substrate</name>
    </ligand>
</feature>
<feature type="binding site" evidence="1">
    <location>
        <position position="292"/>
    </location>
    <ligand>
        <name>substrate</name>
    </ligand>
</feature>
<feature type="binding site" evidence="1">
    <location>
        <position position="293"/>
    </location>
    <ligand>
        <name>Ca(2+)</name>
        <dbReference type="ChEBI" id="CHEBI:29108"/>
    </ligand>
</feature>
<feature type="binding site" evidence="1">
    <location>
        <position position="297"/>
    </location>
    <ligand>
        <name>Ca(2+)</name>
        <dbReference type="ChEBI" id="CHEBI:29108"/>
    </ligand>
</feature>
<feature type="binding site" evidence="1">
    <location>
        <position position="324"/>
    </location>
    <ligand>
        <name>Ca(2+)</name>
        <dbReference type="ChEBI" id="CHEBI:29108"/>
    </ligand>
</feature>
<feature type="binding site" evidence="1">
    <location>
        <position position="371"/>
    </location>
    <ligand>
        <name>substrate</name>
    </ligand>
</feature>
<feature type="glycosylation site" description="N-linked (GlcNAc...) asparagine; by host" evidence="1">
    <location>
        <position position="61"/>
    </location>
</feature>
<feature type="glycosylation site" description="N-linked (GlcNAc...) asparagine; by host" evidence="1">
    <location>
        <position position="70"/>
    </location>
</feature>
<feature type="glycosylation site" description="N-linked (GlcNAc...) asparagine; by host" evidence="1">
    <location>
        <position position="86"/>
    </location>
</feature>
<feature type="glycosylation site" description="N-linked (GlcNAc...) asparagine; by host" evidence="1">
    <location>
        <position position="146"/>
    </location>
</feature>
<feature type="glycosylation site" description="N-linked (GlcNAc...) asparagine; by host" evidence="1">
    <location>
        <position position="200"/>
    </location>
</feature>
<feature type="glycosylation site" description="N-linked (GlcNAc...) asparagine; by host" evidence="1">
    <location>
        <position position="234"/>
    </location>
</feature>
<feature type="glycosylation site" description="N-linked (GlcNAc...) asparagine; by host" evidence="1">
    <location>
        <position position="402"/>
    </location>
</feature>
<feature type="disulfide bond" evidence="1">
    <location>
        <begin position="92"/>
        <end position="417"/>
    </location>
</feature>
<feature type="disulfide bond" evidence="1">
    <location>
        <begin position="124"/>
        <end position="129"/>
    </location>
</feature>
<feature type="disulfide bond" evidence="1">
    <location>
        <begin position="183"/>
        <end position="230"/>
    </location>
</feature>
<feature type="disulfide bond" evidence="1">
    <location>
        <begin position="232"/>
        <end position="237"/>
    </location>
</feature>
<feature type="disulfide bond" evidence="1">
    <location>
        <begin position="278"/>
        <end position="291"/>
    </location>
</feature>
<feature type="disulfide bond" evidence="1">
    <location>
        <begin position="280"/>
        <end position="289"/>
    </location>
</feature>
<feature type="disulfide bond" evidence="1">
    <location>
        <begin position="318"/>
        <end position="337"/>
    </location>
</feature>
<feature type="disulfide bond" evidence="1">
    <location>
        <begin position="421"/>
        <end position="447"/>
    </location>
</feature>
<organism>
    <name type="scientific">Influenza A virus (strain A/Memphis/18/1978 H3N2)</name>
    <dbReference type="NCBI Taxonomy" id="383579"/>
    <lineage>
        <taxon>Viruses</taxon>
        <taxon>Riboviria</taxon>
        <taxon>Orthornavirae</taxon>
        <taxon>Negarnaviricota</taxon>
        <taxon>Polyploviricotina</taxon>
        <taxon>Insthoviricetes</taxon>
        <taxon>Articulavirales</taxon>
        <taxon>Orthomyxoviridae</taxon>
        <taxon>Alphainfluenzavirus</taxon>
        <taxon>Alphainfluenzavirus influenzae</taxon>
        <taxon>Influenza A virus</taxon>
    </lineage>
</organism>
<gene>
    <name evidence="1" type="primary">NA</name>
</gene>